<evidence type="ECO:0000250" key="1"/>
<evidence type="ECO:0000255" key="2"/>
<evidence type="ECO:0000256" key="3">
    <source>
        <dbReference type="SAM" id="MobiDB-lite"/>
    </source>
</evidence>
<evidence type="ECO:0000269" key="4">
    <source>
    </source>
</evidence>
<evidence type="ECO:0000269" key="5">
    <source>
    </source>
</evidence>
<evidence type="ECO:0000269" key="6">
    <source>
    </source>
</evidence>
<evidence type="ECO:0000305" key="7"/>
<organism>
    <name type="scientific">Arabidopsis thaliana</name>
    <name type="common">Mouse-ear cress</name>
    <dbReference type="NCBI Taxonomy" id="3702"/>
    <lineage>
        <taxon>Eukaryota</taxon>
        <taxon>Viridiplantae</taxon>
        <taxon>Streptophyta</taxon>
        <taxon>Embryophyta</taxon>
        <taxon>Tracheophyta</taxon>
        <taxon>Spermatophyta</taxon>
        <taxon>Magnoliopsida</taxon>
        <taxon>eudicotyledons</taxon>
        <taxon>Gunneridae</taxon>
        <taxon>Pentapetalae</taxon>
        <taxon>rosids</taxon>
        <taxon>malvids</taxon>
        <taxon>Brassicales</taxon>
        <taxon>Brassicaceae</taxon>
        <taxon>Camelineae</taxon>
        <taxon>Arabidopsis</taxon>
    </lineage>
</organism>
<proteinExistence type="evidence at protein level"/>
<dbReference type="EC" id="2.4.1.43"/>
<dbReference type="EMBL" id="AJ243015">
    <property type="protein sequence ID" value="CAB91508.1"/>
    <property type="molecule type" value="Genomic_DNA"/>
</dbReference>
<dbReference type="EMBL" id="DQ370437">
    <property type="protein sequence ID" value="ABD14404.1"/>
    <property type="molecule type" value="mRNA"/>
</dbReference>
<dbReference type="EMBL" id="AL137898">
    <property type="protein sequence ID" value="CAB71043.1"/>
    <property type="molecule type" value="Genomic_DNA"/>
</dbReference>
<dbReference type="EMBL" id="CP002686">
    <property type="protein sequence ID" value="AEE80159.1"/>
    <property type="molecule type" value="Genomic_DNA"/>
</dbReference>
<dbReference type="EMBL" id="AY039515">
    <property type="protein sequence ID" value="AAK62572.1"/>
    <property type="status" value="ALT_FRAME"/>
    <property type="molecule type" value="mRNA"/>
</dbReference>
<dbReference type="EMBL" id="BT000630">
    <property type="protein sequence ID" value="AAN18196.1"/>
    <property type="status" value="ALT_FRAME"/>
    <property type="molecule type" value="mRNA"/>
</dbReference>
<dbReference type="PIR" id="T47905">
    <property type="entry name" value="T47905"/>
</dbReference>
<dbReference type="RefSeq" id="NP_191672.1">
    <property type="nucleotide sequence ID" value="NM_115977.4"/>
</dbReference>
<dbReference type="SMR" id="Q9LE59"/>
<dbReference type="BioGRID" id="10599">
    <property type="interactions" value="14"/>
</dbReference>
<dbReference type="FunCoup" id="Q9LE59">
    <property type="interactions" value="1490"/>
</dbReference>
<dbReference type="STRING" id="3702.Q9LE59"/>
<dbReference type="CAZy" id="GT8">
    <property type="family name" value="Glycosyltransferase Family 8"/>
</dbReference>
<dbReference type="GlyCosmos" id="Q9LE59">
    <property type="glycosylation" value="5 sites, No reported glycans"/>
</dbReference>
<dbReference type="GlyGen" id="Q9LE59">
    <property type="glycosylation" value="5 sites"/>
</dbReference>
<dbReference type="iPTMnet" id="Q9LE59"/>
<dbReference type="PaxDb" id="3702-AT3G61130.1"/>
<dbReference type="ProteomicsDB" id="221902"/>
<dbReference type="EnsemblPlants" id="AT3G61130.1">
    <property type="protein sequence ID" value="AT3G61130.1"/>
    <property type="gene ID" value="AT3G61130"/>
</dbReference>
<dbReference type="GeneID" id="825285"/>
<dbReference type="Gramene" id="AT3G61130.1">
    <property type="protein sequence ID" value="AT3G61130.1"/>
    <property type="gene ID" value="AT3G61130"/>
</dbReference>
<dbReference type="KEGG" id="ath:AT3G61130"/>
<dbReference type="Araport" id="AT3G61130"/>
<dbReference type="TAIR" id="AT3G61130">
    <property type="gene designation" value="GAUT1"/>
</dbReference>
<dbReference type="eggNOG" id="ENOG502QSDQ">
    <property type="taxonomic scope" value="Eukaryota"/>
</dbReference>
<dbReference type="HOGENOM" id="CLU_010770_2_0_1"/>
<dbReference type="InParanoid" id="Q9LE59"/>
<dbReference type="OMA" id="RNCNLNE"/>
<dbReference type="OrthoDB" id="411524at2759"/>
<dbReference type="PhylomeDB" id="Q9LE59"/>
<dbReference type="BRENDA" id="2.4.1.43">
    <property type="organism ID" value="399"/>
</dbReference>
<dbReference type="UniPathway" id="UPA00845"/>
<dbReference type="CD-CODE" id="4299E36E">
    <property type="entry name" value="Nucleolus"/>
</dbReference>
<dbReference type="PRO" id="PR:Q9LE59"/>
<dbReference type="Proteomes" id="UP000006548">
    <property type="component" value="Chromosome 3"/>
</dbReference>
<dbReference type="ExpressionAtlas" id="Q9LE59">
    <property type="expression patterns" value="baseline and differential"/>
</dbReference>
<dbReference type="GO" id="GO:0005768">
    <property type="term" value="C:endosome"/>
    <property type="evidence" value="ECO:0007005"/>
    <property type="project" value="TAIR"/>
</dbReference>
<dbReference type="GO" id="GO:0005794">
    <property type="term" value="C:Golgi apparatus"/>
    <property type="evidence" value="ECO:0007005"/>
    <property type="project" value="TAIR"/>
</dbReference>
<dbReference type="GO" id="GO:0005797">
    <property type="term" value="C:Golgi medial cisterna"/>
    <property type="evidence" value="ECO:0007005"/>
    <property type="project" value="TAIR"/>
</dbReference>
<dbReference type="GO" id="GO:0000139">
    <property type="term" value="C:Golgi membrane"/>
    <property type="evidence" value="ECO:0007669"/>
    <property type="project" value="UniProtKB-SubCell"/>
</dbReference>
<dbReference type="GO" id="GO:0005802">
    <property type="term" value="C:trans-Golgi network"/>
    <property type="evidence" value="ECO:0007005"/>
    <property type="project" value="TAIR"/>
</dbReference>
<dbReference type="GO" id="GO:0047262">
    <property type="term" value="F:polygalacturonate 4-alpha-galacturonosyltransferase activity"/>
    <property type="evidence" value="ECO:0000314"/>
    <property type="project" value="TAIR"/>
</dbReference>
<dbReference type="GO" id="GO:0010289">
    <property type="term" value="P:homogalacturonan biosynthetic process"/>
    <property type="evidence" value="ECO:0000314"/>
    <property type="project" value="TAIR"/>
</dbReference>
<dbReference type="CDD" id="cd06429">
    <property type="entry name" value="GT8_like_1"/>
    <property type="match status" value="1"/>
</dbReference>
<dbReference type="Gene3D" id="3.90.550.10">
    <property type="entry name" value="Spore Coat Polysaccharide Biosynthesis Protein SpsA, Chain A"/>
    <property type="match status" value="1"/>
</dbReference>
<dbReference type="InterPro" id="IPR029993">
    <property type="entry name" value="GAUT"/>
</dbReference>
<dbReference type="InterPro" id="IPR002495">
    <property type="entry name" value="Glyco_trans_8"/>
</dbReference>
<dbReference type="InterPro" id="IPR029044">
    <property type="entry name" value="Nucleotide-diphossugar_trans"/>
</dbReference>
<dbReference type="PANTHER" id="PTHR32116">
    <property type="entry name" value="GALACTURONOSYLTRANSFERASE 4-RELATED"/>
    <property type="match status" value="1"/>
</dbReference>
<dbReference type="PANTHER" id="PTHR32116:SF4">
    <property type="entry name" value="POLYGALACTURONATE 4-ALPHA-GALACTURONOSYLTRANSFERASE"/>
    <property type="match status" value="1"/>
</dbReference>
<dbReference type="Pfam" id="PF01501">
    <property type="entry name" value="Glyco_transf_8"/>
    <property type="match status" value="1"/>
</dbReference>
<dbReference type="SUPFAM" id="SSF53448">
    <property type="entry name" value="Nucleotide-diphospho-sugar transferases"/>
    <property type="match status" value="1"/>
</dbReference>
<name>GAUT1_ARATH</name>
<reference key="1">
    <citation type="journal article" date="2000" name="Plant Mol. Biol.">
        <title>Organization and structural evolution of four multigene families in Arabidopsis thaliana: AtLCAD, AtLGT, AtMYST and AtHD-GL2.</title>
        <authorList>
            <person name="Tavares R."/>
            <person name="Aubourg S."/>
            <person name="Lecharny A."/>
            <person name="Kreis M."/>
        </authorList>
    </citation>
    <scope>NUCLEOTIDE SEQUENCE [GENOMIC DNA]</scope>
    <scope>TISSUE SPECIFICITY</scope>
</reference>
<reference key="2">
    <citation type="journal article" date="2006" name="Proc. Natl. Acad. Sci. U.S.A.">
        <title>Functional identification of an Arabidopsis pectin biosynthetic homogalacturonan galacturonosyltransferase.</title>
        <authorList>
            <person name="Sterling J.D."/>
            <person name="Atmodjo M.A."/>
            <person name="Inwood S.E."/>
            <person name="Kumar Kolli V.S."/>
            <person name="Quigley H.F."/>
            <person name="Hahn M.G."/>
            <person name="Mohnen D."/>
        </authorList>
    </citation>
    <scope>NUCLEOTIDE SEQUENCE [MRNA]</scope>
    <scope>FUNCTION</scope>
    <scope>CATALYTIC ACTIVITY</scope>
    <scope>IDENTIFICATION BY MASS SPECTROMETRY</scope>
    <scope>TISSUE SPECIFICITY</scope>
</reference>
<reference key="3">
    <citation type="journal article" date="2000" name="Nature">
        <title>Sequence and analysis of chromosome 3 of the plant Arabidopsis thaliana.</title>
        <authorList>
            <person name="Salanoubat M."/>
            <person name="Lemcke K."/>
            <person name="Rieger M."/>
            <person name="Ansorge W."/>
            <person name="Unseld M."/>
            <person name="Fartmann B."/>
            <person name="Valle G."/>
            <person name="Bloecker H."/>
            <person name="Perez-Alonso M."/>
            <person name="Obermaier B."/>
            <person name="Delseny M."/>
            <person name="Boutry M."/>
            <person name="Grivell L.A."/>
            <person name="Mache R."/>
            <person name="Puigdomenech P."/>
            <person name="De Simone V."/>
            <person name="Choisne N."/>
            <person name="Artiguenave F."/>
            <person name="Robert C."/>
            <person name="Brottier P."/>
            <person name="Wincker P."/>
            <person name="Cattolico L."/>
            <person name="Weissenbach J."/>
            <person name="Saurin W."/>
            <person name="Quetier F."/>
            <person name="Schaefer M."/>
            <person name="Mueller-Auer S."/>
            <person name="Gabel C."/>
            <person name="Fuchs M."/>
            <person name="Benes V."/>
            <person name="Wurmbach E."/>
            <person name="Drzonek H."/>
            <person name="Erfle H."/>
            <person name="Jordan N."/>
            <person name="Bangert S."/>
            <person name="Wiedelmann R."/>
            <person name="Kranz H."/>
            <person name="Voss H."/>
            <person name="Holland R."/>
            <person name="Brandt P."/>
            <person name="Nyakatura G."/>
            <person name="Vezzi A."/>
            <person name="D'Angelo M."/>
            <person name="Pallavicini A."/>
            <person name="Toppo S."/>
            <person name="Simionati B."/>
            <person name="Conrad A."/>
            <person name="Hornischer K."/>
            <person name="Kauer G."/>
            <person name="Loehnert T.-H."/>
            <person name="Nordsiek G."/>
            <person name="Reichelt J."/>
            <person name="Scharfe M."/>
            <person name="Schoen O."/>
            <person name="Bargues M."/>
            <person name="Terol J."/>
            <person name="Climent J."/>
            <person name="Navarro P."/>
            <person name="Collado C."/>
            <person name="Perez-Perez A."/>
            <person name="Ottenwaelder B."/>
            <person name="Duchemin D."/>
            <person name="Cooke R."/>
            <person name="Laudie M."/>
            <person name="Berger-Llauro C."/>
            <person name="Purnelle B."/>
            <person name="Masuy D."/>
            <person name="de Haan M."/>
            <person name="Maarse A.C."/>
            <person name="Alcaraz J.-P."/>
            <person name="Cottet A."/>
            <person name="Casacuberta E."/>
            <person name="Monfort A."/>
            <person name="Argiriou A."/>
            <person name="Flores M."/>
            <person name="Liguori R."/>
            <person name="Vitale D."/>
            <person name="Mannhaupt G."/>
            <person name="Haase D."/>
            <person name="Schoof H."/>
            <person name="Rudd S."/>
            <person name="Zaccaria P."/>
            <person name="Mewes H.-W."/>
            <person name="Mayer K.F.X."/>
            <person name="Kaul S."/>
            <person name="Town C.D."/>
            <person name="Koo H.L."/>
            <person name="Tallon L.J."/>
            <person name="Jenkins J."/>
            <person name="Rooney T."/>
            <person name="Rizzo M."/>
            <person name="Walts A."/>
            <person name="Utterback T."/>
            <person name="Fujii C.Y."/>
            <person name="Shea T.P."/>
            <person name="Creasy T.H."/>
            <person name="Haas B."/>
            <person name="Maiti R."/>
            <person name="Wu D."/>
            <person name="Peterson J."/>
            <person name="Van Aken S."/>
            <person name="Pai G."/>
            <person name="Militscher J."/>
            <person name="Sellers P."/>
            <person name="Gill J.E."/>
            <person name="Feldblyum T.V."/>
            <person name="Preuss D."/>
            <person name="Lin X."/>
            <person name="Nierman W.C."/>
            <person name="Salzberg S.L."/>
            <person name="White O."/>
            <person name="Venter J.C."/>
            <person name="Fraser C.M."/>
            <person name="Kaneko T."/>
            <person name="Nakamura Y."/>
            <person name="Sato S."/>
            <person name="Kato T."/>
            <person name="Asamizu E."/>
            <person name="Sasamoto S."/>
            <person name="Kimura T."/>
            <person name="Idesawa K."/>
            <person name="Kawashima K."/>
            <person name="Kishida Y."/>
            <person name="Kiyokawa C."/>
            <person name="Kohara M."/>
            <person name="Matsumoto M."/>
            <person name="Matsuno A."/>
            <person name="Muraki A."/>
            <person name="Nakayama S."/>
            <person name="Nakazaki N."/>
            <person name="Shinpo S."/>
            <person name="Takeuchi C."/>
            <person name="Wada T."/>
            <person name="Watanabe A."/>
            <person name="Yamada M."/>
            <person name="Yasuda M."/>
            <person name="Tabata S."/>
        </authorList>
    </citation>
    <scope>NUCLEOTIDE SEQUENCE [LARGE SCALE GENOMIC DNA]</scope>
    <source>
        <strain>cv. Columbia</strain>
    </source>
</reference>
<reference key="4">
    <citation type="journal article" date="2017" name="Plant J.">
        <title>Araport11: a complete reannotation of the Arabidopsis thaliana reference genome.</title>
        <authorList>
            <person name="Cheng C.Y."/>
            <person name="Krishnakumar V."/>
            <person name="Chan A.P."/>
            <person name="Thibaud-Nissen F."/>
            <person name="Schobel S."/>
            <person name="Town C.D."/>
        </authorList>
    </citation>
    <scope>GENOME REANNOTATION</scope>
    <source>
        <strain>cv. Columbia</strain>
    </source>
</reference>
<reference key="5">
    <citation type="journal article" date="2003" name="Science">
        <title>Empirical analysis of transcriptional activity in the Arabidopsis genome.</title>
        <authorList>
            <person name="Yamada K."/>
            <person name="Lim J."/>
            <person name="Dale J.M."/>
            <person name="Chen H."/>
            <person name="Shinn P."/>
            <person name="Palm C.J."/>
            <person name="Southwick A.M."/>
            <person name="Wu H.C."/>
            <person name="Kim C.J."/>
            <person name="Nguyen M."/>
            <person name="Pham P.K."/>
            <person name="Cheuk R.F."/>
            <person name="Karlin-Newmann G."/>
            <person name="Liu S.X."/>
            <person name="Lam B."/>
            <person name="Sakano H."/>
            <person name="Wu T."/>
            <person name="Yu G."/>
            <person name="Miranda M."/>
            <person name="Quach H.L."/>
            <person name="Tripp M."/>
            <person name="Chang C.H."/>
            <person name="Lee J.M."/>
            <person name="Toriumi M.J."/>
            <person name="Chan M.M."/>
            <person name="Tang C.C."/>
            <person name="Onodera C.S."/>
            <person name="Deng J.M."/>
            <person name="Akiyama K."/>
            <person name="Ansari Y."/>
            <person name="Arakawa T."/>
            <person name="Banh J."/>
            <person name="Banno F."/>
            <person name="Bowser L."/>
            <person name="Brooks S.Y."/>
            <person name="Carninci P."/>
            <person name="Chao Q."/>
            <person name="Choy N."/>
            <person name="Enju A."/>
            <person name="Goldsmith A.D."/>
            <person name="Gurjal M."/>
            <person name="Hansen N.F."/>
            <person name="Hayashizaki Y."/>
            <person name="Johnson-Hopson C."/>
            <person name="Hsuan V.W."/>
            <person name="Iida K."/>
            <person name="Karnes M."/>
            <person name="Khan S."/>
            <person name="Koesema E."/>
            <person name="Ishida J."/>
            <person name="Jiang P.X."/>
            <person name="Jones T."/>
            <person name="Kawai J."/>
            <person name="Kamiya A."/>
            <person name="Meyers C."/>
            <person name="Nakajima M."/>
            <person name="Narusaka M."/>
            <person name="Seki M."/>
            <person name="Sakurai T."/>
            <person name="Satou M."/>
            <person name="Tamse R."/>
            <person name="Vaysberg M."/>
            <person name="Wallender E.K."/>
            <person name="Wong C."/>
            <person name="Yamamura Y."/>
            <person name="Yuan S."/>
            <person name="Shinozaki K."/>
            <person name="Davis R.W."/>
            <person name="Theologis A."/>
            <person name="Ecker J.R."/>
        </authorList>
    </citation>
    <scope>NUCLEOTIDE SEQUENCE [LARGE SCALE MRNA]</scope>
    <source>
        <strain>cv. Columbia</strain>
    </source>
</reference>
<reference key="6">
    <citation type="journal article" date="2009" name="Mol. Plant">
        <title>Arabidopsis thaliana T-DNA mutants implicate GAUT genes in the biosynthesis of pectin and xylan in cell walls and seed testa.</title>
        <authorList>
            <person name="Caffall K.H."/>
            <person name="Pattathil S."/>
            <person name="Phillips S.E."/>
            <person name="Hahn M.G."/>
            <person name="Mohnen D."/>
        </authorList>
    </citation>
    <scope>TISSUE SPECIFICITY</scope>
</reference>
<sequence length="673" mass="77373">MALKRGLSGVNRIRGSGGGSRSVLVLLIFFCVFAPLCFFVGRGVYIDSSNDYSIVSVKQNLDWRERLAMQSVRSLFSKEILDVIATSTADLGPLSLDSFKKNNLSASWRGTGVDPSFRHSENPATPDVKSNNLNEKRDSISKDSIHQKVETPTKIHRRQLREKRREMRANELVQHNDDTILKLENAAIERSKSVDSAVLGKYSIWRRENENDNSDSNIRLMRDQVIMARVYSGIAKLKNKNDLLQELQARLKDSQRVLGEATSDADLPRSAHEKLRAMGQVLAKAKMQLYDCKLVTGKLRAMLQTADEQVRSLKKQSTFLAQLAAKTIPNPIHCLSMRLTIDYYLLSPEKRKFPRSENLENPNLYHYALFSDNVLAASVVVNSTIMNAKDPSKHVFHLVTDKLNFGAMNMWFLLNPPGKATIHVENVDEFKWLNSSYCPVLRQLESAAMREYYFKADHPTSGSSNLKYRNPKYLSMLNHLRFYLPEVYPKLNKILFLDDDIIVQKDLTPLWEVNLNGKVNGAVETCGESFHRFDKYLNFSNPHIARNFNPNACGWAYGMNMFDLKEWKKRDITGIYHKWQNMNENRTLWKLGTLPPGLITFYGLTHPLNKAWHVLGLGYNPSIDKKDIENAAVVHYNGNMKPWLELAMSKYRPYWTKYIKFDHPYLRRCNLHE</sequence>
<accession>Q9LE59</accession>
<accession>Q94BZ8</accession>
<keyword id="KW-0961">Cell wall biogenesis/degradation</keyword>
<keyword id="KW-0325">Glycoprotein</keyword>
<keyword id="KW-0328">Glycosyltransferase</keyword>
<keyword id="KW-0333">Golgi apparatus</keyword>
<keyword id="KW-0472">Membrane</keyword>
<keyword id="KW-1185">Reference proteome</keyword>
<keyword id="KW-0735">Signal-anchor</keyword>
<keyword id="KW-0808">Transferase</keyword>
<keyword id="KW-0812">Transmembrane</keyword>
<keyword id="KW-1133">Transmembrane helix</keyword>
<gene>
    <name type="primary">GAUT1</name>
    <name type="synonym">JS36</name>
    <name type="synonym">LGT1</name>
    <name type="ordered locus">At3g61130</name>
    <name type="ORF">T20K12.30</name>
</gene>
<comment type="function">
    <text evidence="5">Involved in pectin biosynthesis. Catalyzes the transfer of galacturonic acid from uridine 5'-diphosphogalacturonic acid onto the pectic polysaccharide homogalacturonan.</text>
</comment>
<comment type="catalytic activity">
    <reaction evidence="5">
        <text>[(1-&gt;4)-alpha-D-galacturonosyl](n) + UDP-alpha-D-galacturonate = [(1-&gt;4)-alpha-D-galacturonosyl](n+1) + UDP + H(+)</text>
        <dbReference type="Rhea" id="RHEA:13573"/>
        <dbReference type="Rhea" id="RHEA-COMP:14570"/>
        <dbReference type="Rhea" id="RHEA-COMP:14571"/>
        <dbReference type="ChEBI" id="CHEBI:15378"/>
        <dbReference type="ChEBI" id="CHEBI:57635"/>
        <dbReference type="ChEBI" id="CHEBI:58223"/>
        <dbReference type="ChEBI" id="CHEBI:140523"/>
        <dbReference type="EC" id="2.4.1.43"/>
    </reaction>
</comment>
<comment type="pathway">
    <text>Glycan metabolism; pectin biosynthesis.</text>
</comment>
<comment type="subcellular location">
    <subcellularLocation>
        <location evidence="1">Golgi apparatus membrane</location>
        <topology evidence="1">Single-pass type II membrane protein</topology>
    </subcellularLocation>
</comment>
<comment type="tissue specificity">
    <text evidence="4 5 6">Expressed in seedlings, inflorescences, flowers, siliques, pollen, roots, stems and leaves.</text>
</comment>
<comment type="similarity">
    <text evidence="7">Belongs to the glycosyltransferase 8 family.</text>
</comment>
<comment type="sequence caution" evidence="7">
    <conflict type="frameshift">
        <sequence resource="EMBL-CDS" id="AAK62572"/>
    </conflict>
</comment>
<comment type="sequence caution" evidence="7">
    <conflict type="frameshift">
        <sequence resource="EMBL-CDS" id="AAN18196"/>
    </conflict>
</comment>
<protein>
    <recommendedName>
        <fullName>Polygalacturonate 4-alpha-galacturonosyltransferase</fullName>
        <ecNumber>2.4.1.43</ecNumber>
    </recommendedName>
    <alternativeName>
        <fullName>Alpha-1,4-galacturonosyltransferase 1</fullName>
    </alternativeName>
    <alternativeName>
        <fullName>Galacturonosyltransferase 1</fullName>
    </alternativeName>
    <alternativeName>
        <fullName>Like glycosyl transferase 1</fullName>
    </alternativeName>
</protein>
<feature type="chain" id="PRO_0000392298" description="Polygalacturonate 4-alpha-galacturonosyltransferase">
    <location>
        <begin position="1"/>
        <end position="673"/>
    </location>
</feature>
<feature type="topological domain" description="Cytoplasmic" evidence="2">
    <location>
        <begin position="1"/>
        <end position="22"/>
    </location>
</feature>
<feature type="transmembrane region" description="Helical; Signal-anchor for type II membrane protein" evidence="2">
    <location>
        <begin position="23"/>
        <end position="43"/>
    </location>
</feature>
<feature type="topological domain" description="Lumenal" evidence="2">
    <location>
        <begin position="44"/>
        <end position="673"/>
    </location>
</feature>
<feature type="region of interest" description="Disordered" evidence="3">
    <location>
        <begin position="112"/>
        <end position="136"/>
    </location>
</feature>
<feature type="glycosylation site" description="N-linked (GlcNAc...) asparagine" evidence="2">
    <location>
        <position position="103"/>
    </location>
</feature>
<feature type="glycosylation site" description="N-linked (GlcNAc...) asparagine" evidence="2">
    <location>
        <position position="382"/>
    </location>
</feature>
<feature type="glycosylation site" description="N-linked (GlcNAc...) asparagine" evidence="2">
    <location>
        <position position="434"/>
    </location>
</feature>
<feature type="glycosylation site" description="N-linked (GlcNAc...) asparagine" evidence="2">
    <location>
        <position position="538"/>
    </location>
</feature>
<feature type="glycosylation site" description="N-linked (GlcNAc...) asparagine" evidence="2">
    <location>
        <position position="585"/>
    </location>
</feature>